<keyword id="KW-0238">DNA-binding</keyword>
<keyword id="KW-0413">Isomerase</keyword>
<keyword id="KW-0460">Magnesium</keyword>
<keyword id="KW-0479">Metal-binding</keyword>
<keyword id="KW-0677">Repeat</keyword>
<keyword id="KW-0799">Topoisomerase</keyword>
<keyword id="KW-0862">Zinc</keyword>
<keyword id="KW-0863">Zinc-finger</keyword>
<comment type="function">
    <text evidence="1">Releases the supercoiling and torsional tension of DNA, which is introduced during the DNA replication and transcription, by transiently cleaving and rejoining one strand of the DNA duplex. Introduces a single-strand break via transesterification at a target site in duplex DNA. The scissile phosphodiester is attacked by the catalytic tyrosine of the enzyme, resulting in the formation of a DNA-(5'-phosphotyrosyl)-enzyme intermediate and the expulsion of a 3'-OH DNA strand. The free DNA strand then undergoes passage around the unbroken strand, thus removing DNA supercoils. Finally, in the religation step, the DNA 3'-OH attacks the covalent intermediate to expel the active-site tyrosine and restore the DNA phosphodiester backbone.</text>
</comment>
<comment type="catalytic activity">
    <reaction evidence="1">
        <text>ATP-independent breakage of single-stranded DNA, followed by passage and rejoining.</text>
        <dbReference type="EC" id="5.6.2.1"/>
    </reaction>
</comment>
<comment type="cofactor">
    <cofactor evidence="1">
        <name>Mg(2+)</name>
        <dbReference type="ChEBI" id="CHEBI:18420"/>
    </cofactor>
</comment>
<comment type="subunit">
    <text evidence="1">Monomer.</text>
</comment>
<comment type="similarity">
    <text evidence="1">Belongs to the type IA topoisomerase family.</text>
</comment>
<proteinExistence type="inferred from homology"/>
<dbReference type="EC" id="5.6.2.1" evidence="1"/>
<dbReference type="EMBL" id="AE013218">
    <property type="protein sequence ID" value="AAM67831.1"/>
    <property type="molecule type" value="Genomic_DNA"/>
</dbReference>
<dbReference type="RefSeq" id="WP_011053798.1">
    <property type="nucleotide sequence ID" value="NC_004061.1"/>
</dbReference>
<dbReference type="SMR" id="Q8K9P7"/>
<dbReference type="STRING" id="198804.BUsg_273"/>
<dbReference type="GeneID" id="93003743"/>
<dbReference type="KEGG" id="bas:BUsg_273"/>
<dbReference type="eggNOG" id="COG0550">
    <property type="taxonomic scope" value="Bacteria"/>
</dbReference>
<dbReference type="HOGENOM" id="CLU_002929_4_3_6"/>
<dbReference type="Proteomes" id="UP000000416">
    <property type="component" value="Chromosome"/>
</dbReference>
<dbReference type="GO" id="GO:0005694">
    <property type="term" value="C:chromosome"/>
    <property type="evidence" value="ECO:0007669"/>
    <property type="project" value="InterPro"/>
</dbReference>
<dbReference type="GO" id="GO:0003677">
    <property type="term" value="F:DNA binding"/>
    <property type="evidence" value="ECO:0007669"/>
    <property type="project" value="UniProtKB-KW"/>
</dbReference>
<dbReference type="GO" id="GO:0003917">
    <property type="term" value="F:DNA topoisomerase type I (single strand cut, ATP-independent) activity"/>
    <property type="evidence" value="ECO:0007669"/>
    <property type="project" value="UniProtKB-UniRule"/>
</dbReference>
<dbReference type="GO" id="GO:0008270">
    <property type="term" value="F:zinc ion binding"/>
    <property type="evidence" value="ECO:0007669"/>
    <property type="project" value="UniProtKB-KW"/>
</dbReference>
<dbReference type="GO" id="GO:0006265">
    <property type="term" value="P:DNA topological change"/>
    <property type="evidence" value="ECO:0007669"/>
    <property type="project" value="UniProtKB-UniRule"/>
</dbReference>
<dbReference type="CDD" id="cd00186">
    <property type="entry name" value="TOP1Ac"/>
    <property type="match status" value="1"/>
</dbReference>
<dbReference type="FunFam" id="3.40.50.140:FF:000001">
    <property type="entry name" value="DNA topoisomerase 1"/>
    <property type="match status" value="1"/>
</dbReference>
<dbReference type="Gene3D" id="2.20.25.10">
    <property type="match status" value="1"/>
</dbReference>
<dbReference type="Gene3D" id="3.40.50.140">
    <property type="match status" value="1"/>
</dbReference>
<dbReference type="Gene3D" id="3.30.65.10">
    <property type="entry name" value="Bacterial Topoisomerase I, domain 1"/>
    <property type="match status" value="3"/>
</dbReference>
<dbReference type="Gene3D" id="1.10.460.10">
    <property type="entry name" value="Topoisomerase I, domain 2"/>
    <property type="match status" value="1"/>
</dbReference>
<dbReference type="Gene3D" id="2.70.20.10">
    <property type="entry name" value="Topoisomerase I, domain 3"/>
    <property type="match status" value="1"/>
</dbReference>
<dbReference type="Gene3D" id="1.10.290.10">
    <property type="entry name" value="Topoisomerase I, domain 4"/>
    <property type="match status" value="1"/>
</dbReference>
<dbReference type="HAMAP" id="MF_00952">
    <property type="entry name" value="Topoisom_1_prok"/>
    <property type="match status" value="1"/>
</dbReference>
<dbReference type="InterPro" id="IPR049330">
    <property type="entry name" value="TOP1_Znf"/>
</dbReference>
<dbReference type="InterPro" id="IPR000380">
    <property type="entry name" value="Topo_IA"/>
</dbReference>
<dbReference type="InterPro" id="IPR003601">
    <property type="entry name" value="Topo_IA_2"/>
</dbReference>
<dbReference type="InterPro" id="IPR023406">
    <property type="entry name" value="Topo_IA_AS"/>
</dbReference>
<dbReference type="InterPro" id="IPR013497">
    <property type="entry name" value="Topo_IA_cen"/>
</dbReference>
<dbReference type="InterPro" id="IPR013824">
    <property type="entry name" value="Topo_IA_cen_sub1"/>
</dbReference>
<dbReference type="InterPro" id="IPR013825">
    <property type="entry name" value="Topo_IA_cen_sub2"/>
</dbReference>
<dbReference type="InterPro" id="IPR013826">
    <property type="entry name" value="Topo_IA_cen_sub3"/>
</dbReference>
<dbReference type="InterPro" id="IPR023405">
    <property type="entry name" value="Topo_IA_core_domain"/>
</dbReference>
<dbReference type="InterPro" id="IPR003602">
    <property type="entry name" value="Topo_IA_DNA-bd_dom"/>
</dbReference>
<dbReference type="InterPro" id="IPR013498">
    <property type="entry name" value="Topo_IA_Znf"/>
</dbReference>
<dbReference type="InterPro" id="IPR005733">
    <property type="entry name" value="TopoI_bac-type"/>
</dbReference>
<dbReference type="InterPro" id="IPR013263">
    <property type="entry name" value="TopoI_Znr_bac"/>
</dbReference>
<dbReference type="InterPro" id="IPR028612">
    <property type="entry name" value="Topoisom_1_IA"/>
</dbReference>
<dbReference type="InterPro" id="IPR006171">
    <property type="entry name" value="TOPRIM_dom"/>
</dbReference>
<dbReference type="NCBIfam" id="TIGR01051">
    <property type="entry name" value="topA_bact"/>
    <property type="match status" value="1"/>
</dbReference>
<dbReference type="PANTHER" id="PTHR42785:SF1">
    <property type="entry name" value="DNA TOPOISOMERASE"/>
    <property type="match status" value="1"/>
</dbReference>
<dbReference type="PANTHER" id="PTHR42785">
    <property type="entry name" value="DNA TOPOISOMERASE, TYPE IA, CORE"/>
    <property type="match status" value="1"/>
</dbReference>
<dbReference type="Pfam" id="PF01131">
    <property type="entry name" value="Topoisom_bac"/>
    <property type="match status" value="1"/>
</dbReference>
<dbReference type="Pfam" id="PF01751">
    <property type="entry name" value="Toprim"/>
    <property type="match status" value="1"/>
</dbReference>
<dbReference type="Pfam" id="PF21372">
    <property type="entry name" value="Zn_ribbon_bTOP1"/>
    <property type="match status" value="1"/>
</dbReference>
<dbReference type="Pfam" id="PF01396">
    <property type="entry name" value="Zn_ribbon_Top1"/>
    <property type="match status" value="2"/>
</dbReference>
<dbReference type="Pfam" id="PF08272">
    <property type="entry name" value="Zn_Ribbon_Topo"/>
    <property type="match status" value="2"/>
</dbReference>
<dbReference type="PRINTS" id="PR00417">
    <property type="entry name" value="PRTPISMRASEI"/>
</dbReference>
<dbReference type="SMART" id="SM00437">
    <property type="entry name" value="TOP1Ac"/>
    <property type="match status" value="1"/>
</dbReference>
<dbReference type="SMART" id="SM00436">
    <property type="entry name" value="TOP1Bc"/>
    <property type="match status" value="1"/>
</dbReference>
<dbReference type="SMART" id="SM00493">
    <property type="entry name" value="TOPRIM"/>
    <property type="match status" value="1"/>
</dbReference>
<dbReference type="SUPFAM" id="SSF56712">
    <property type="entry name" value="Prokaryotic type I DNA topoisomerase"/>
    <property type="match status" value="1"/>
</dbReference>
<dbReference type="SUPFAM" id="SSF57783">
    <property type="entry name" value="Zinc beta-ribbon"/>
    <property type="match status" value="2"/>
</dbReference>
<dbReference type="PROSITE" id="PS00396">
    <property type="entry name" value="TOPO_IA_1"/>
    <property type="match status" value="1"/>
</dbReference>
<dbReference type="PROSITE" id="PS52039">
    <property type="entry name" value="TOPO_IA_2"/>
    <property type="match status" value="1"/>
</dbReference>
<dbReference type="PROSITE" id="PS50880">
    <property type="entry name" value="TOPRIM"/>
    <property type="match status" value="1"/>
</dbReference>
<organism>
    <name type="scientific">Buchnera aphidicola subsp. Schizaphis graminum (strain Sg)</name>
    <dbReference type="NCBI Taxonomy" id="198804"/>
    <lineage>
        <taxon>Bacteria</taxon>
        <taxon>Pseudomonadati</taxon>
        <taxon>Pseudomonadota</taxon>
        <taxon>Gammaproteobacteria</taxon>
        <taxon>Enterobacterales</taxon>
        <taxon>Erwiniaceae</taxon>
        <taxon>Buchnera</taxon>
    </lineage>
</organism>
<accession>Q8K9P7</accession>
<sequence>MCKSLVIVESPVKAKTISKYLGKQYIVKSSVGHVRDLINNKSKNKKNIKKSNIKHNEKTALIQQMGINPYKNWKAEYHILPGKEKIISELKNIANKVHYIYLATDLDREGEAIAWHLKEVIGGNSLKFRRVVFNEITKKSIEKAFQNIGKINMNRVYSQQARRFMDRIVGYMISPLLWKKISRGLSAGRVQSAAVRLITDREYEIKNFIEREHWKISLSLLSKENKKVTMDITHYRNKTFLLNNKKEVNSTIEKIKNLSFIITDRKDKIFKKKPPAPLITSTLQQASNIDLGFSVKKTMFLAQKLYEQGYITYIRTDSYFLSNYAIEKVRSYIENFYGSDFLPKKSNIYSNQKYSQEAHEAIRPSDVQVVNIDNCDPDAKKLYKLIWNYFIASQMKSERYKSIKTTVMADVFKLQSNTKIVLFSGWTKILKKSNNVNFKFPVLDIGTTLILDKILPHQIFTKPPPRFSESSLVRELEKKGIGRPSTYATIITKIKEKGYLKIKKNKFYAAKIGEILITRLKKNFSDLVDYDFTARMEKNLDQVSDKLINWKHLLNSFFDNFSQQLEQAKKPPEEGGMELNTTVPTEIDCSLCNKKMGIKTAVTGVFLSCLGYNSEPNEKRCKNTINLISLNDLSTTKKEEKNFHLKNRCKKCNLVMDVYLINENLKIFICINNPSCNGYNLKKGIFKKSLNCSLKKIKCEKCKNDMLFKTGRFGNFFMCINDTCKNTRKILPNGEISEPKFEPIPFPDILCEKSNTWFVLREGISGIFFAANTFPKSRETRSPFVEELARFEYLLPKKLHYLASAPQRDNKGNKTIVCFNKLNKQQYIASKKEGKFTGWAAFFIDRKWCIVNK</sequence>
<evidence type="ECO:0000255" key="1">
    <source>
        <dbReference type="HAMAP-Rule" id="MF_00952"/>
    </source>
</evidence>
<evidence type="ECO:0000255" key="2">
    <source>
        <dbReference type="PROSITE-ProRule" id="PRU01383"/>
    </source>
</evidence>
<gene>
    <name evidence="1" type="primary">topA</name>
    <name type="ordered locus">BUsg_273</name>
</gene>
<reference key="1">
    <citation type="journal article" date="2002" name="Science">
        <title>50 million years of genomic stasis in endosymbiotic bacteria.</title>
        <authorList>
            <person name="Tamas I."/>
            <person name="Klasson L."/>
            <person name="Canbaeck B."/>
            <person name="Naeslund A.K."/>
            <person name="Eriksson A.-S."/>
            <person name="Wernegreen J.J."/>
            <person name="Sandstroem J.P."/>
            <person name="Moran N.A."/>
            <person name="Andersson S.G.E."/>
        </authorList>
    </citation>
    <scope>NUCLEOTIDE SEQUENCE [LARGE SCALE GENOMIC DNA]</scope>
    <source>
        <strain>Sg</strain>
    </source>
</reference>
<name>TOP1_BUCAP</name>
<feature type="chain" id="PRO_0000145145" description="DNA topoisomerase 1">
    <location>
        <begin position="1"/>
        <end position="853"/>
    </location>
</feature>
<feature type="domain" description="Toprim" evidence="1">
    <location>
        <begin position="3"/>
        <end position="136"/>
    </location>
</feature>
<feature type="domain" description="Topo IA-type catalytic" evidence="2">
    <location>
        <begin position="152"/>
        <end position="565"/>
    </location>
</feature>
<feature type="zinc finger region" description="C4-type 1">
    <location>
        <begin position="589"/>
        <end position="621"/>
    </location>
</feature>
<feature type="zinc finger region" description="C4-type 2">
    <location>
        <begin position="649"/>
        <end position="676"/>
    </location>
</feature>
<feature type="zinc finger region" description="C4-type 3">
    <location>
        <begin position="699"/>
        <end position="724"/>
    </location>
</feature>
<feature type="region of interest" description="Interaction with DNA" evidence="1">
    <location>
        <begin position="186"/>
        <end position="191"/>
    </location>
</feature>
<feature type="active site" description="O-(5'-phospho-DNA)-tyrosine intermediate" evidence="2">
    <location>
        <position position="313"/>
    </location>
</feature>
<feature type="binding site" evidence="1">
    <location>
        <position position="9"/>
    </location>
    <ligand>
        <name>Mg(2+)</name>
        <dbReference type="ChEBI" id="CHEBI:18420"/>
        <note>catalytic</note>
    </ligand>
</feature>
<feature type="binding site" evidence="1">
    <location>
        <position position="105"/>
    </location>
    <ligand>
        <name>Mg(2+)</name>
        <dbReference type="ChEBI" id="CHEBI:18420"/>
        <note>catalytic</note>
    </ligand>
</feature>
<feature type="site" description="Interaction with DNA" evidence="1">
    <location>
        <position position="33"/>
    </location>
</feature>
<feature type="site" description="Interaction with DNA" evidence="1">
    <location>
        <position position="162"/>
    </location>
</feature>
<feature type="site" description="Interaction with DNA" evidence="1">
    <location>
        <position position="163"/>
    </location>
</feature>
<feature type="site" description="Interaction with DNA" evidence="1">
    <location>
        <position position="166"/>
    </location>
</feature>
<feature type="site" description="Interaction with DNA" evidence="1">
    <location>
        <position position="171"/>
    </location>
</feature>
<feature type="site" description="Interaction with DNA" evidence="1">
    <location>
        <position position="178"/>
    </location>
</feature>
<feature type="site" description="Interaction with DNA" evidence="1">
    <location>
        <position position="315"/>
    </location>
</feature>
<protein>
    <recommendedName>
        <fullName evidence="1">DNA topoisomerase 1</fullName>
        <ecNumber evidence="1">5.6.2.1</ecNumber>
    </recommendedName>
    <alternativeName>
        <fullName evidence="1">DNA topoisomerase I</fullName>
    </alternativeName>
    <alternativeName>
        <fullName>Omega-protein</fullName>
    </alternativeName>
    <alternativeName>
        <fullName>Relaxing enzyme</fullName>
    </alternativeName>
    <alternativeName>
        <fullName>Swivelase</fullName>
    </alternativeName>
    <alternativeName>
        <fullName>Untwisting enzyme</fullName>
    </alternativeName>
</protein>